<protein>
    <recommendedName>
        <fullName evidence="1">Glucokinase</fullName>
        <ecNumber evidence="1">2.7.1.2</ecNumber>
    </recommendedName>
    <alternativeName>
        <fullName evidence="1">Glucose kinase</fullName>
    </alternativeName>
</protein>
<feature type="chain" id="PRO_0000215122" description="Glucokinase">
    <location>
        <begin position="1"/>
        <end position="343"/>
    </location>
</feature>
<feature type="binding site" evidence="1">
    <location>
        <begin position="18"/>
        <end position="23"/>
    </location>
    <ligand>
        <name>ATP</name>
        <dbReference type="ChEBI" id="CHEBI:30616"/>
    </ligand>
</feature>
<evidence type="ECO:0000255" key="1">
    <source>
        <dbReference type="HAMAP-Rule" id="MF_00524"/>
    </source>
</evidence>
<dbReference type="EC" id="2.7.1.2" evidence="1"/>
<dbReference type="EMBL" id="AE014292">
    <property type="protein sequence ID" value="AAN34216.1"/>
    <property type="molecule type" value="Genomic_DNA"/>
</dbReference>
<dbReference type="EMBL" id="CP002998">
    <property type="protein sequence ID" value="AEM20493.1"/>
    <property type="molecule type" value="Genomic_DNA"/>
</dbReference>
<dbReference type="RefSeq" id="WP_004690408.1">
    <property type="nucleotide sequence ID" value="NZ_KN046805.1"/>
</dbReference>
<dbReference type="SMR" id="Q8FV09"/>
<dbReference type="KEGG" id="bms:BRA1049"/>
<dbReference type="KEGG" id="bsi:BS1330_II1041"/>
<dbReference type="PATRIC" id="fig|204722.21.peg.1071"/>
<dbReference type="HOGENOM" id="CLU_042582_1_0_5"/>
<dbReference type="PhylomeDB" id="Q8FV09"/>
<dbReference type="Proteomes" id="UP000007104">
    <property type="component" value="Chromosome II"/>
</dbReference>
<dbReference type="GO" id="GO:0005829">
    <property type="term" value="C:cytosol"/>
    <property type="evidence" value="ECO:0007669"/>
    <property type="project" value="TreeGrafter"/>
</dbReference>
<dbReference type="GO" id="GO:0005524">
    <property type="term" value="F:ATP binding"/>
    <property type="evidence" value="ECO:0007669"/>
    <property type="project" value="UniProtKB-UniRule"/>
</dbReference>
<dbReference type="GO" id="GO:0005536">
    <property type="term" value="F:D-glucose binding"/>
    <property type="evidence" value="ECO:0007669"/>
    <property type="project" value="InterPro"/>
</dbReference>
<dbReference type="GO" id="GO:0004340">
    <property type="term" value="F:glucokinase activity"/>
    <property type="evidence" value="ECO:0007669"/>
    <property type="project" value="UniProtKB-UniRule"/>
</dbReference>
<dbReference type="GO" id="GO:0006096">
    <property type="term" value="P:glycolytic process"/>
    <property type="evidence" value="ECO:0007669"/>
    <property type="project" value="UniProtKB-UniRule"/>
</dbReference>
<dbReference type="CDD" id="cd24008">
    <property type="entry name" value="ASKHA_NBD_GLK"/>
    <property type="match status" value="1"/>
</dbReference>
<dbReference type="Gene3D" id="3.30.420.40">
    <property type="match status" value="1"/>
</dbReference>
<dbReference type="Gene3D" id="3.40.367.20">
    <property type="match status" value="1"/>
</dbReference>
<dbReference type="HAMAP" id="MF_00524">
    <property type="entry name" value="Glucokinase"/>
    <property type="match status" value="1"/>
</dbReference>
<dbReference type="InterPro" id="IPR043129">
    <property type="entry name" value="ATPase_NBD"/>
</dbReference>
<dbReference type="InterPro" id="IPR050201">
    <property type="entry name" value="Bacterial_glucokinase"/>
</dbReference>
<dbReference type="InterPro" id="IPR003836">
    <property type="entry name" value="Glucokinase"/>
</dbReference>
<dbReference type="NCBIfam" id="TIGR00749">
    <property type="entry name" value="glk"/>
    <property type="match status" value="1"/>
</dbReference>
<dbReference type="NCBIfam" id="NF001417">
    <property type="entry name" value="PRK00292.1-4"/>
    <property type="match status" value="1"/>
</dbReference>
<dbReference type="PANTHER" id="PTHR47690">
    <property type="entry name" value="GLUCOKINASE"/>
    <property type="match status" value="1"/>
</dbReference>
<dbReference type="PANTHER" id="PTHR47690:SF1">
    <property type="entry name" value="GLUCOKINASE"/>
    <property type="match status" value="1"/>
</dbReference>
<dbReference type="Pfam" id="PF02685">
    <property type="entry name" value="Glucokinase"/>
    <property type="match status" value="1"/>
</dbReference>
<dbReference type="SUPFAM" id="SSF53067">
    <property type="entry name" value="Actin-like ATPase domain"/>
    <property type="match status" value="1"/>
</dbReference>
<keyword id="KW-0067">ATP-binding</keyword>
<keyword id="KW-0963">Cytoplasm</keyword>
<keyword id="KW-0324">Glycolysis</keyword>
<keyword id="KW-0418">Kinase</keyword>
<keyword id="KW-0547">Nucleotide-binding</keyword>
<keyword id="KW-0808">Transferase</keyword>
<comment type="catalytic activity">
    <reaction evidence="1">
        <text>D-glucose + ATP = D-glucose 6-phosphate + ADP + H(+)</text>
        <dbReference type="Rhea" id="RHEA:17825"/>
        <dbReference type="ChEBI" id="CHEBI:4167"/>
        <dbReference type="ChEBI" id="CHEBI:15378"/>
        <dbReference type="ChEBI" id="CHEBI:30616"/>
        <dbReference type="ChEBI" id="CHEBI:61548"/>
        <dbReference type="ChEBI" id="CHEBI:456216"/>
        <dbReference type="EC" id="2.7.1.2"/>
    </reaction>
</comment>
<comment type="subcellular location">
    <subcellularLocation>
        <location evidence="1">Cytoplasm</location>
    </subcellularLocation>
</comment>
<comment type="similarity">
    <text evidence="1">Belongs to the bacterial glucokinase family.</text>
</comment>
<name>GLK_BRUSU</name>
<proteinExistence type="inferred from homology"/>
<accession>Q8FV09</accession>
<accession>G0KE55</accession>
<organism>
    <name type="scientific">Brucella suis biovar 1 (strain 1330)</name>
    <dbReference type="NCBI Taxonomy" id="204722"/>
    <lineage>
        <taxon>Bacteria</taxon>
        <taxon>Pseudomonadati</taxon>
        <taxon>Pseudomonadota</taxon>
        <taxon>Alphaproteobacteria</taxon>
        <taxon>Hyphomicrobiales</taxon>
        <taxon>Brucellaceae</taxon>
        <taxon>Brucella/Ochrobactrum group</taxon>
        <taxon>Brucella</taxon>
    </lineage>
</organism>
<reference key="1">
    <citation type="journal article" date="2002" name="Proc. Natl. Acad. Sci. U.S.A.">
        <title>The Brucella suis genome reveals fundamental similarities between animal and plant pathogens and symbionts.</title>
        <authorList>
            <person name="Paulsen I.T."/>
            <person name="Seshadri R."/>
            <person name="Nelson K.E."/>
            <person name="Eisen J.A."/>
            <person name="Heidelberg J.F."/>
            <person name="Read T.D."/>
            <person name="Dodson R.J."/>
            <person name="Umayam L.A."/>
            <person name="Brinkac L.M."/>
            <person name="Beanan M.J."/>
            <person name="Daugherty S.C."/>
            <person name="DeBoy R.T."/>
            <person name="Durkin A.S."/>
            <person name="Kolonay J.F."/>
            <person name="Madupu R."/>
            <person name="Nelson W.C."/>
            <person name="Ayodeji B."/>
            <person name="Kraul M."/>
            <person name="Shetty J."/>
            <person name="Malek J.A."/>
            <person name="Van Aken S.E."/>
            <person name="Riedmuller S."/>
            <person name="Tettelin H."/>
            <person name="Gill S.R."/>
            <person name="White O."/>
            <person name="Salzberg S.L."/>
            <person name="Hoover D.L."/>
            <person name="Lindler L.E."/>
            <person name="Halling S.M."/>
            <person name="Boyle S.M."/>
            <person name="Fraser C.M."/>
        </authorList>
    </citation>
    <scope>NUCLEOTIDE SEQUENCE [LARGE SCALE GENOMIC DNA]</scope>
    <source>
        <strain>1330</strain>
    </source>
</reference>
<reference key="2">
    <citation type="journal article" date="2011" name="J. Bacteriol.">
        <title>Revised genome sequence of Brucella suis 1330.</title>
        <authorList>
            <person name="Tae H."/>
            <person name="Shallom S."/>
            <person name="Settlage R."/>
            <person name="Preston D."/>
            <person name="Adams L.G."/>
            <person name="Garner H.R."/>
        </authorList>
    </citation>
    <scope>NUCLEOTIDE SEQUENCE [LARGE SCALE GENOMIC DNA]</scope>
    <source>
        <strain>1330</strain>
    </source>
</reference>
<sequence>MQAIIDAEQSFKFPVLVGDIGGTNARFSILVDSNAEPKEFPVLQTADYATIDEAIQHAILDQTAIQPRSVILAVAGPVDGDEIDLTNCDWVVRPKKMIADLGFEDVTVLNDFEAQALAVVSLEGHHMEQIGGKPEEAVATRVVLGPGTGLGVAGLVRTRHAWVPVPGEGGHIDIGPRTERDYQIFPHIERIEGRVTGEQILSGRGLRNLYLGICAADKITPTLETPVDITSAGLDGSNPQAAETLDLFATYLGRLAGDLALIFMAHGGVYLSGGIPVRILSALKAGSFRAAFEDKAPHKAIMRDIPVRVITYQLAALTGLSAFARTPSRFEVSTEGRRWRMRR</sequence>
<gene>
    <name evidence="1" type="primary">glk</name>
    <name type="ordered locus">BRA1049</name>
    <name type="ordered locus">BS1330_II1041</name>
</gene>